<keyword id="KW-0320">Glycogen biosynthesis</keyword>
<keyword id="KW-0328">Glycosyltransferase</keyword>
<keyword id="KW-1185">Reference proteome</keyword>
<keyword id="KW-0808">Transferase</keyword>
<organism>
    <name type="scientific">Geobacter sulfurreducens (strain ATCC 51573 / DSM 12127 / PCA)</name>
    <dbReference type="NCBI Taxonomy" id="243231"/>
    <lineage>
        <taxon>Bacteria</taxon>
        <taxon>Pseudomonadati</taxon>
        <taxon>Thermodesulfobacteriota</taxon>
        <taxon>Desulfuromonadia</taxon>
        <taxon>Geobacterales</taxon>
        <taxon>Geobacteraceae</taxon>
        <taxon>Geobacter</taxon>
    </lineage>
</organism>
<sequence length="501" mass="56222">MTRLNILMAASECVPFAKEGGLADVVGVLPKYLAHMGHDVRVVMPLYSRIDPERFGLERLPGVLVVPMGIMGNQYCGVWEGRLPGSAVPVYFLEHEGYYGREGLYEEDNVGYMDNDNRFIFLSRAAMELPKLIGFAPDVFHAHDWHTAAVPVFLNTLYRDDPLVGGAASVLTVHNMQHQGNFYPGAMEVLGIGWEHFTFLGLEKDNQTNLLKGGLYHATVLNTVSEGYAREMQTPEYGWGLDGVVRARSADLVGILNGVDYEEWNPETDPHIVANYSRSDLSGKKLCKRDVQRFFGLPERDDVPLFGLVGRLVKQKGIDILAEAIHRILALDVQVVMLGAGEPWSHFYFGDVRNEYPEKFGLYIGYNNGLSHRIEAGSDFFVMPSAFEPCGLNQMYSLRYGTLPIVRATGGLDDSVENFDEQNLTGNGFKFWSHDADALFDTVGWTVHTWYRRKDAMAALIGNAMAKRFTWEDSAARYEELYCRALRKRLGVGVFVRRFGG</sequence>
<gene>
    <name evidence="1" type="primary">glgA1</name>
    <name type="synonym">glgA-1</name>
    <name type="ordered locus">GSU1023</name>
</gene>
<dbReference type="EC" id="2.4.1.21" evidence="1"/>
<dbReference type="EMBL" id="AE017180">
    <property type="protein sequence ID" value="AAR34350.1"/>
    <property type="molecule type" value="Genomic_DNA"/>
</dbReference>
<dbReference type="RefSeq" id="NP_952077.1">
    <property type="nucleotide sequence ID" value="NC_002939.5"/>
</dbReference>
<dbReference type="RefSeq" id="WP_010941686.1">
    <property type="nucleotide sequence ID" value="NC_002939.5"/>
</dbReference>
<dbReference type="SMR" id="Q74ED9"/>
<dbReference type="FunCoup" id="Q74ED9">
    <property type="interactions" value="281"/>
</dbReference>
<dbReference type="STRING" id="243231.GSU1023"/>
<dbReference type="CAZy" id="GT5">
    <property type="family name" value="Glycosyltransferase Family 5"/>
</dbReference>
<dbReference type="EnsemblBacteria" id="AAR34350">
    <property type="protein sequence ID" value="AAR34350"/>
    <property type="gene ID" value="GSU1023"/>
</dbReference>
<dbReference type="KEGG" id="gsu:GSU1023"/>
<dbReference type="PATRIC" id="fig|243231.5.peg.1023"/>
<dbReference type="eggNOG" id="COG0297">
    <property type="taxonomic scope" value="Bacteria"/>
</dbReference>
<dbReference type="HOGENOM" id="CLU_009583_18_2_7"/>
<dbReference type="InParanoid" id="Q74ED9"/>
<dbReference type="OrthoDB" id="9808590at2"/>
<dbReference type="UniPathway" id="UPA00164"/>
<dbReference type="Proteomes" id="UP000000577">
    <property type="component" value="Chromosome"/>
</dbReference>
<dbReference type="GO" id="GO:0005829">
    <property type="term" value="C:cytosol"/>
    <property type="evidence" value="ECO:0000318"/>
    <property type="project" value="GO_Central"/>
</dbReference>
<dbReference type="GO" id="GO:0009011">
    <property type="term" value="F:alpha-1,4-glucan glucosyltransferase (ADP-glucose donor) activity"/>
    <property type="evidence" value="ECO:0007669"/>
    <property type="project" value="UniProtKB-UniRule"/>
</dbReference>
<dbReference type="GO" id="GO:0004373">
    <property type="term" value="F:alpha-1,4-glucan glucosyltransferase (UDP-glucose donor) activity"/>
    <property type="evidence" value="ECO:0007669"/>
    <property type="project" value="InterPro"/>
</dbReference>
<dbReference type="GO" id="GO:0005978">
    <property type="term" value="P:glycogen biosynthetic process"/>
    <property type="evidence" value="ECO:0000318"/>
    <property type="project" value="GO_Central"/>
</dbReference>
<dbReference type="CDD" id="cd03791">
    <property type="entry name" value="GT5_Glycogen_synthase_DULL1-like"/>
    <property type="match status" value="1"/>
</dbReference>
<dbReference type="Gene3D" id="3.40.50.2000">
    <property type="entry name" value="Glycogen Phosphorylase B"/>
    <property type="match status" value="2"/>
</dbReference>
<dbReference type="HAMAP" id="MF_00484">
    <property type="entry name" value="Glycogen_synth"/>
    <property type="match status" value="1"/>
</dbReference>
<dbReference type="InterPro" id="IPR001296">
    <property type="entry name" value="Glyco_trans_1"/>
</dbReference>
<dbReference type="InterPro" id="IPR011835">
    <property type="entry name" value="GS/SS"/>
</dbReference>
<dbReference type="InterPro" id="IPR013534">
    <property type="entry name" value="Starch_synth_cat_dom"/>
</dbReference>
<dbReference type="NCBIfam" id="TIGR02095">
    <property type="entry name" value="glgA"/>
    <property type="match status" value="1"/>
</dbReference>
<dbReference type="PANTHER" id="PTHR45825:SF11">
    <property type="entry name" value="ALPHA AMYLASE DOMAIN-CONTAINING PROTEIN"/>
    <property type="match status" value="1"/>
</dbReference>
<dbReference type="PANTHER" id="PTHR45825">
    <property type="entry name" value="GRANULE-BOUND STARCH SYNTHASE 1, CHLOROPLASTIC/AMYLOPLASTIC"/>
    <property type="match status" value="1"/>
</dbReference>
<dbReference type="Pfam" id="PF08323">
    <property type="entry name" value="Glyco_transf_5"/>
    <property type="match status" value="1"/>
</dbReference>
<dbReference type="Pfam" id="PF00534">
    <property type="entry name" value="Glycos_transf_1"/>
    <property type="match status" value="1"/>
</dbReference>
<dbReference type="SUPFAM" id="SSF53756">
    <property type="entry name" value="UDP-Glycosyltransferase/glycogen phosphorylase"/>
    <property type="match status" value="1"/>
</dbReference>
<accession>Q74ED9</accession>
<reference key="1">
    <citation type="journal article" date="2003" name="Science">
        <title>Genome of Geobacter sulfurreducens: metal reduction in subsurface environments.</title>
        <authorList>
            <person name="Methe B.A."/>
            <person name="Nelson K.E."/>
            <person name="Eisen J.A."/>
            <person name="Paulsen I.T."/>
            <person name="Nelson W.C."/>
            <person name="Heidelberg J.F."/>
            <person name="Wu D."/>
            <person name="Wu M."/>
            <person name="Ward N.L."/>
            <person name="Beanan M.J."/>
            <person name="Dodson R.J."/>
            <person name="Madupu R."/>
            <person name="Brinkac L.M."/>
            <person name="Daugherty S.C."/>
            <person name="DeBoy R.T."/>
            <person name="Durkin A.S."/>
            <person name="Gwinn M.L."/>
            <person name="Kolonay J.F."/>
            <person name="Sullivan S.A."/>
            <person name="Haft D.H."/>
            <person name="Selengut J."/>
            <person name="Davidsen T.M."/>
            <person name="Zafar N."/>
            <person name="White O."/>
            <person name="Tran B."/>
            <person name="Romero C."/>
            <person name="Forberger H.A."/>
            <person name="Weidman J.F."/>
            <person name="Khouri H.M."/>
            <person name="Feldblyum T.V."/>
            <person name="Utterback T.R."/>
            <person name="Van Aken S.E."/>
            <person name="Lovley D.R."/>
            <person name="Fraser C.M."/>
        </authorList>
    </citation>
    <scope>NUCLEOTIDE SEQUENCE [LARGE SCALE GENOMIC DNA]</scope>
    <source>
        <strain>ATCC 51573 / DSM 12127 / PCA</strain>
    </source>
</reference>
<protein>
    <recommendedName>
        <fullName evidence="1">Glycogen synthase 1</fullName>
        <ecNumber evidence="1">2.4.1.21</ecNumber>
    </recommendedName>
    <alternativeName>
        <fullName evidence="1">Starch [bacterial glycogen] synthase 1</fullName>
    </alternativeName>
</protein>
<proteinExistence type="inferred from homology"/>
<evidence type="ECO:0000255" key="1">
    <source>
        <dbReference type="HAMAP-Rule" id="MF_00484"/>
    </source>
</evidence>
<feature type="chain" id="PRO_0000188617" description="Glycogen synthase 1">
    <location>
        <begin position="1"/>
        <end position="501"/>
    </location>
</feature>
<feature type="binding site" evidence="1">
    <location>
        <position position="18"/>
    </location>
    <ligand>
        <name>ADP-alpha-D-glucose</name>
        <dbReference type="ChEBI" id="CHEBI:57498"/>
    </ligand>
</feature>
<comment type="function">
    <text evidence="1">Synthesizes alpha-1,4-glucan chains using ADP-glucose.</text>
</comment>
<comment type="catalytic activity">
    <reaction evidence="1">
        <text>[(1-&gt;4)-alpha-D-glucosyl](n) + ADP-alpha-D-glucose = [(1-&gt;4)-alpha-D-glucosyl](n+1) + ADP + H(+)</text>
        <dbReference type="Rhea" id="RHEA:18189"/>
        <dbReference type="Rhea" id="RHEA-COMP:9584"/>
        <dbReference type="Rhea" id="RHEA-COMP:9587"/>
        <dbReference type="ChEBI" id="CHEBI:15378"/>
        <dbReference type="ChEBI" id="CHEBI:15444"/>
        <dbReference type="ChEBI" id="CHEBI:57498"/>
        <dbReference type="ChEBI" id="CHEBI:456216"/>
        <dbReference type="EC" id="2.4.1.21"/>
    </reaction>
</comment>
<comment type="pathway">
    <text evidence="1">Glycan biosynthesis; glycogen biosynthesis.</text>
</comment>
<comment type="similarity">
    <text evidence="1">Belongs to the glycosyltransferase 1 family. Bacterial/plant glycogen synthase subfamily.</text>
</comment>
<name>GLGA1_GEOSL</name>